<feature type="chain" id="PRO_0000159898" description="3-dehydroquinate dehydratase">
    <location>
        <begin position="1"/>
        <end position="143"/>
    </location>
</feature>
<feature type="active site" description="Proton acceptor" evidence="1">
    <location>
        <position position="21"/>
    </location>
</feature>
<feature type="active site" description="Proton donor" evidence="1">
    <location>
        <position position="99"/>
    </location>
</feature>
<feature type="binding site" evidence="1">
    <location>
        <position position="73"/>
    </location>
    <ligand>
        <name>substrate</name>
    </ligand>
</feature>
<feature type="binding site" evidence="1">
    <location>
        <position position="79"/>
    </location>
    <ligand>
        <name>substrate</name>
    </ligand>
</feature>
<feature type="binding site" evidence="1">
    <location>
        <position position="86"/>
    </location>
    <ligand>
        <name>substrate</name>
    </ligand>
</feature>
<feature type="binding site" evidence="1">
    <location>
        <begin position="100"/>
        <end position="101"/>
    </location>
    <ligand>
        <name>substrate</name>
    </ligand>
</feature>
<feature type="binding site" evidence="1">
    <location>
        <position position="110"/>
    </location>
    <ligand>
        <name>substrate</name>
    </ligand>
</feature>
<feature type="site" description="Transition state stabilizer" evidence="1">
    <location>
        <position position="16"/>
    </location>
</feature>
<comment type="function">
    <text evidence="1">Catalyzes a trans-dehydration via an enolate intermediate.</text>
</comment>
<comment type="catalytic activity">
    <reaction evidence="1">
        <text>3-dehydroquinate = 3-dehydroshikimate + H2O</text>
        <dbReference type="Rhea" id="RHEA:21096"/>
        <dbReference type="ChEBI" id="CHEBI:15377"/>
        <dbReference type="ChEBI" id="CHEBI:16630"/>
        <dbReference type="ChEBI" id="CHEBI:32364"/>
        <dbReference type="EC" id="4.2.1.10"/>
    </reaction>
</comment>
<comment type="pathway">
    <text evidence="1">Metabolic intermediate biosynthesis; chorismate biosynthesis; chorismate from D-erythrose 4-phosphate and phosphoenolpyruvate: step 3/7.</text>
</comment>
<comment type="subunit">
    <text evidence="1">Homododecamer.</text>
</comment>
<comment type="similarity">
    <text evidence="1">Belongs to the type-II 3-dehydroquinase family.</text>
</comment>
<dbReference type="EC" id="4.2.1.10" evidence="1"/>
<dbReference type="EMBL" id="AE000513">
    <property type="protein sequence ID" value="AAF10357.1"/>
    <property type="molecule type" value="Genomic_DNA"/>
</dbReference>
<dbReference type="PIR" id="F75475">
    <property type="entry name" value="F75475"/>
</dbReference>
<dbReference type="RefSeq" id="NP_294502.1">
    <property type="nucleotide sequence ID" value="NC_001263.1"/>
</dbReference>
<dbReference type="RefSeq" id="WP_010887424.1">
    <property type="nucleotide sequence ID" value="NC_001263.1"/>
</dbReference>
<dbReference type="SMR" id="Q9RW91"/>
<dbReference type="FunCoup" id="Q9RW91">
    <property type="interactions" value="186"/>
</dbReference>
<dbReference type="STRING" id="243230.DR_0778"/>
<dbReference type="PaxDb" id="243230-DR_0778"/>
<dbReference type="EnsemblBacteria" id="AAF10357">
    <property type="protein sequence ID" value="AAF10357"/>
    <property type="gene ID" value="DR_0778"/>
</dbReference>
<dbReference type="GeneID" id="69517023"/>
<dbReference type="KEGG" id="dra:DR_0778"/>
<dbReference type="PATRIC" id="fig|243230.17.peg.958"/>
<dbReference type="eggNOG" id="COG0757">
    <property type="taxonomic scope" value="Bacteria"/>
</dbReference>
<dbReference type="HOGENOM" id="CLU_090968_3_0_0"/>
<dbReference type="InParanoid" id="Q9RW91"/>
<dbReference type="OrthoDB" id="9790793at2"/>
<dbReference type="UniPathway" id="UPA00053">
    <property type="reaction ID" value="UER00086"/>
</dbReference>
<dbReference type="Proteomes" id="UP000002524">
    <property type="component" value="Chromosome 1"/>
</dbReference>
<dbReference type="GO" id="GO:0003855">
    <property type="term" value="F:3-dehydroquinate dehydratase activity"/>
    <property type="evidence" value="ECO:0000318"/>
    <property type="project" value="GO_Central"/>
</dbReference>
<dbReference type="GO" id="GO:0008652">
    <property type="term" value="P:amino acid biosynthetic process"/>
    <property type="evidence" value="ECO:0007669"/>
    <property type="project" value="UniProtKB-KW"/>
</dbReference>
<dbReference type="GO" id="GO:0009073">
    <property type="term" value="P:aromatic amino acid family biosynthetic process"/>
    <property type="evidence" value="ECO:0007669"/>
    <property type="project" value="UniProtKB-KW"/>
</dbReference>
<dbReference type="GO" id="GO:0009423">
    <property type="term" value="P:chorismate biosynthetic process"/>
    <property type="evidence" value="ECO:0007669"/>
    <property type="project" value="UniProtKB-UniRule"/>
</dbReference>
<dbReference type="GO" id="GO:0019631">
    <property type="term" value="P:quinate catabolic process"/>
    <property type="evidence" value="ECO:0000318"/>
    <property type="project" value="GO_Central"/>
</dbReference>
<dbReference type="CDD" id="cd00466">
    <property type="entry name" value="DHQase_II"/>
    <property type="match status" value="1"/>
</dbReference>
<dbReference type="Gene3D" id="3.40.50.9100">
    <property type="entry name" value="Dehydroquinase, class II"/>
    <property type="match status" value="1"/>
</dbReference>
<dbReference type="HAMAP" id="MF_00169">
    <property type="entry name" value="AroQ"/>
    <property type="match status" value="1"/>
</dbReference>
<dbReference type="InterPro" id="IPR001874">
    <property type="entry name" value="DHquinase_II"/>
</dbReference>
<dbReference type="InterPro" id="IPR018509">
    <property type="entry name" value="DHquinase_II_CS"/>
</dbReference>
<dbReference type="InterPro" id="IPR036441">
    <property type="entry name" value="DHquinase_II_sf"/>
</dbReference>
<dbReference type="NCBIfam" id="TIGR01088">
    <property type="entry name" value="aroQ"/>
    <property type="match status" value="1"/>
</dbReference>
<dbReference type="NCBIfam" id="NF003805">
    <property type="entry name" value="PRK05395.1-2"/>
    <property type="match status" value="1"/>
</dbReference>
<dbReference type="NCBIfam" id="NF003806">
    <property type="entry name" value="PRK05395.1-3"/>
    <property type="match status" value="1"/>
</dbReference>
<dbReference type="NCBIfam" id="NF003807">
    <property type="entry name" value="PRK05395.1-4"/>
    <property type="match status" value="1"/>
</dbReference>
<dbReference type="PANTHER" id="PTHR21272">
    <property type="entry name" value="CATABOLIC 3-DEHYDROQUINASE"/>
    <property type="match status" value="1"/>
</dbReference>
<dbReference type="PANTHER" id="PTHR21272:SF3">
    <property type="entry name" value="CATABOLIC 3-DEHYDROQUINASE"/>
    <property type="match status" value="1"/>
</dbReference>
<dbReference type="Pfam" id="PF01220">
    <property type="entry name" value="DHquinase_II"/>
    <property type="match status" value="1"/>
</dbReference>
<dbReference type="PIRSF" id="PIRSF001399">
    <property type="entry name" value="DHquinase_II"/>
    <property type="match status" value="1"/>
</dbReference>
<dbReference type="SUPFAM" id="SSF52304">
    <property type="entry name" value="Type II 3-dehydroquinate dehydratase"/>
    <property type="match status" value="1"/>
</dbReference>
<dbReference type="PROSITE" id="PS01029">
    <property type="entry name" value="DEHYDROQUINASE_II"/>
    <property type="match status" value="1"/>
</dbReference>
<reference key="1">
    <citation type="journal article" date="1999" name="Science">
        <title>Genome sequence of the radioresistant bacterium Deinococcus radiodurans R1.</title>
        <authorList>
            <person name="White O."/>
            <person name="Eisen J.A."/>
            <person name="Heidelberg J.F."/>
            <person name="Hickey E.K."/>
            <person name="Peterson J.D."/>
            <person name="Dodson R.J."/>
            <person name="Haft D.H."/>
            <person name="Gwinn M.L."/>
            <person name="Nelson W.C."/>
            <person name="Richardson D.L."/>
            <person name="Moffat K.S."/>
            <person name="Qin H."/>
            <person name="Jiang L."/>
            <person name="Pamphile W."/>
            <person name="Crosby M."/>
            <person name="Shen M."/>
            <person name="Vamathevan J.J."/>
            <person name="Lam P."/>
            <person name="McDonald L.A."/>
            <person name="Utterback T.R."/>
            <person name="Zalewski C."/>
            <person name="Makarova K.S."/>
            <person name="Aravind L."/>
            <person name="Daly M.J."/>
            <person name="Minton K.W."/>
            <person name="Fleischmann R.D."/>
            <person name="Ketchum K.A."/>
            <person name="Nelson K.E."/>
            <person name="Salzberg S.L."/>
            <person name="Smith H.O."/>
            <person name="Venter J.C."/>
            <person name="Fraser C.M."/>
        </authorList>
    </citation>
    <scope>NUCLEOTIDE SEQUENCE [LARGE SCALE GENOMIC DNA]</scope>
    <source>
        <strain>ATCC 13939 / DSM 20539 / JCM 16871 / CCUG 27074 / LMG 4051 / NBRC 15346 / NCIMB 9279 / VKM B-1422 / R1</strain>
    </source>
</reference>
<keyword id="KW-0028">Amino-acid biosynthesis</keyword>
<keyword id="KW-0057">Aromatic amino acid biosynthesis</keyword>
<keyword id="KW-0456">Lyase</keyword>
<keyword id="KW-1185">Reference proteome</keyword>
<name>AROQ_DEIRA</name>
<proteinExistence type="inferred from homology"/>
<sequence>MLLILNGPNLNRLGLREPGVYGSQTLEDLERQCEAWGAELEMSVTCRQSNYEGQLLEWVQDAEEQGFTGLVINPGALTHYSYALRDAIAGQRLPVVEVHISNVDAREEFRHQSVTAAVCRGKISGLGFSGYRLAMEYLAEVLE</sequence>
<protein>
    <recommendedName>
        <fullName evidence="1">3-dehydroquinate dehydratase</fullName>
        <shortName evidence="1">3-dehydroquinase</shortName>
        <ecNumber evidence="1">4.2.1.10</ecNumber>
    </recommendedName>
    <alternativeName>
        <fullName evidence="1">Type II DHQase</fullName>
    </alternativeName>
</protein>
<gene>
    <name evidence="1" type="primary">aroQ</name>
    <name type="ordered locus">DR_0778</name>
</gene>
<evidence type="ECO:0000255" key="1">
    <source>
        <dbReference type="HAMAP-Rule" id="MF_00169"/>
    </source>
</evidence>
<organism>
    <name type="scientific">Deinococcus radiodurans (strain ATCC 13939 / DSM 20539 / JCM 16871 / CCUG 27074 / LMG 4051 / NBRC 15346 / NCIMB 9279 / VKM B-1422 / R1)</name>
    <dbReference type="NCBI Taxonomy" id="243230"/>
    <lineage>
        <taxon>Bacteria</taxon>
        <taxon>Thermotogati</taxon>
        <taxon>Deinococcota</taxon>
        <taxon>Deinococci</taxon>
        <taxon>Deinococcales</taxon>
        <taxon>Deinococcaceae</taxon>
        <taxon>Deinococcus</taxon>
    </lineage>
</organism>
<accession>Q9RW91</accession>